<dbReference type="EMBL" id="L47207">
    <property type="protein sequence ID" value="AAC37330.1"/>
    <property type="molecule type" value="mRNA"/>
</dbReference>
<dbReference type="RefSeq" id="NP_001075728.1">
    <property type="nucleotide sequence ID" value="NM_001082259.1"/>
</dbReference>
<dbReference type="SMR" id="Q28691"/>
<dbReference type="FunCoup" id="Q28691">
    <property type="interactions" value="153"/>
</dbReference>
<dbReference type="STRING" id="9986.ENSOCUP00000000773"/>
<dbReference type="BindingDB" id="Q28691"/>
<dbReference type="ChEMBL" id="CHEMBL1926498"/>
<dbReference type="GlyCosmos" id="Q28691">
    <property type="glycosylation" value="2 sites, No reported glycans"/>
</dbReference>
<dbReference type="PaxDb" id="9986-ENSOCUP00000000773"/>
<dbReference type="Ensembl" id="ENSOCUT00000000895.3">
    <property type="protein sequence ID" value="ENSOCUP00000000773.3"/>
    <property type="gene ID" value="ENSOCUG00000000895.4"/>
</dbReference>
<dbReference type="GeneID" id="100009081"/>
<dbReference type="KEGG" id="ocu:100009081"/>
<dbReference type="CTD" id="5734"/>
<dbReference type="eggNOG" id="KOG3656">
    <property type="taxonomic scope" value="Eukaryota"/>
</dbReference>
<dbReference type="GeneTree" id="ENSGT01050000244902"/>
<dbReference type="InParanoid" id="Q28691"/>
<dbReference type="OrthoDB" id="5959154at2759"/>
<dbReference type="PRO" id="PR:Q28691"/>
<dbReference type="Proteomes" id="UP000001811">
    <property type="component" value="Chromosome 11"/>
</dbReference>
<dbReference type="Bgee" id="ENSOCUG00000000895">
    <property type="expression patterns" value="Expressed in blood and 15 other cell types or tissues"/>
</dbReference>
<dbReference type="ExpressionAtlas" id="Q28691">
    <property type="expression patterns" value="baseline"/>
</dbReference>
<dbReference type="GO" id="GO:0005886">
    <property type="term" value="C:plasma membrane"/>
    <property type="evidence" value="ECO:0007669"/>
    <property type="project" value="UniProtKB-SubCell"/>
</dbReference>
<dbReference type="GO" id="GO:0004957">
    <property type="term" value="F:prostaglandin E receptor activity"/>
    <property type="evidence" value="ECO:0000250"/>
    <property type="project" value="UniProtKB"/>
</dbReference>
<dbReference type="GO" id="GO:0007189">
    <property type="term" value="P:adenylate cyclase-activating G protein-coupled receptor signaling pathway"/>
    <property type="evidence" value="ECO:0007669"/>
    <property type="project" value="Ensembl"/>
</dbReference>
<dbReference type="GO" id="GO:0007193">
    <property type="term" value="P:adenylate cyclase-inhibiting G protein-coupled receptor signaling pathway"/>
    <property type="evidence" value="ECO:0007669"/>
    <property type="project" value="Ensembl"/>
</dbReference>
<dbReference type="GO" id="GO:0007188">
    <property type="term" value="P:adenylate cyclase-modulating G protein-coupled receptor signaling pathway"/>
    <property type="evidence" value="ECO:0000250"/>
    <property type="project" value="UniProtKB"/>
</dbReference>
<dbReference type="GO" id="GO:0071380">
    <property type="term" value="P:cellular response to prostaglandin E stimulus"/>
    <property type="evidence" value="ECO:0007669"/>
    <property type="project" value="TreeGrafter"/>
</dbReference>
<dbReference type="GO" id="GO:0006955">
    <property type="term" value="P:immune response"/>
    <property type="evidence" value="ECO:0007669"/>
    <property type="project" value="Ensembl"/>
</dbReference>
<dbReference type="GO" id="GO:0006954">
    <property type="term" value="P:inflammatory response"/>
    <property type="evidence" value="ECO:0007669"/>
    <property type="project" value="TreeGrafter"/>
</dbReference>
<dbReference type="GO" id="GO:2000420">
    <property type="term" value="P:negative regulation of eosinophil extravasation"/>
    <property type="evidence" value="ECO:0000250"/>
    <property type="project" value="UniProtKB"/>
</dbReference>
<dbReference type="GO" id="GO:0050728">
    <property type="term" value="P:negative regulation of inflammatory response"/>
    <property type="evidence" value="ECO:0000250"/>
    <property type="project" value="UniProtKB"/>
</dbReference>
<dbReference type="GO" id="GO:0033624">
    <property type="term" value="P:negative regulation of integrin activation"/>
    <property type="evidence" value="ECO:0000250"/>
    <property type="project" value="UniProtKB"/>
</dbReference>
<dbReference type="GO" id="GO:0007204">
    <property type="term" value="P:positive regulation of cytosolic calcium ion concentration"/>
    <property type="evidence" value="ECO:0007669"/>
    <property type="project" value="TreeGrafter"/>
</dbReference>
<dbReference type="GO" id="GO:0009612">
    <property type="term" value="P:response to mechanical stimulus"/>
    <property type="evidence" value="ECO:0007669"/>
    <property type="project" value="Ensembl"/>
</dbReference>
<dbReference type="CDD" id="cd15142">
    <property type="entry name" value="7tmA_PGE2_EP4"/>
    <property type="match status" value="1"/>
</dbReference>
<dbReference type="FunFam" id="1.20.1070.10:FF:000101">
    <property type="entry name" value="Prostaglandin E2 receptor EP4 subtype"/>
    <property type="match status" value="1"/>
</dbReference>
<dbReference type="Gene3D" id="1.20.1070.10">
    <property type="entry name" value="Rhodopsin 7-helix transmembrane proteins"/>
    <property type="match status" value="1"/>
</dbReference>
<dbReference type="InterPro" id="IPR000276">
    <property type="entry name" value="GPCR_Rhodpsn"/>
</dbReference>
<dbReference type="InterPro" id="IPR017452">
    <property type="entry name" value="GPCR_Rhodpsn_7TM"/>
</dbReference>
<dbReference type="InterPro" id="IPR001758">
    <property type="entry name" value="Prost_EP4_rcpt"/>
</dbReference>
<dbReference type="InterPro" id="IPR008365">
    <property type="entry name" value="Prostanoid_rcpt"/>
</dbReference>
<dbReference type="InterPro" id="IPR001244">
    <property type="entry name" value="Prostglndn_DP_rcpt"/>
</dbReference>
<dbReference type="PANTHER" id="PTHR11866">
    <property type="entry name" value="G-PROTEIN COUPLED RECEPTOR FAMILY 1 MEMBER"/>
    <property type="match status" value="1"/>
</dbReference>
<dbReference type="PANTHER" id="PTHR11866:SF6">
    <property type="entry name" value="PROSTAGLANDIN E2 RECEPTOR EP4 SUBTYPE"/>
    <property type="match status" value="1"/>
</dbReference>
<dbReference type="Pfam" id="PF00001">
    <property type="entry name" value="7tm_1"/>
    <property type="match status" value="1"/>
</dbReference>
<dbReference type="PRINTS" id="PR00237">
    <property type="entry name" value="GPCRRHODOPSN"/>
</dbReference>
<dbReference type="PRINTS" id="PR00428">
    <property type="entry name" value="PROSTAGLNDNR"/>
</dbReference>
<dbReference type="PRINTS" id="PR01788">
    <property type="entry name" value="PROSTANOIDR"/>
</dbReference>
<dbReference type="PRINTS" id="PR00586">
    <property type="entry name" value="PRSTNOIDEP4R"/>
</dbReference>
<dbReference type="SUPFAM" id="SSF81321">
    <property type="entry name" value="Family A G protein-coupled receptor-like"/>
    <property type="match status" value="1"/>
</dbReference>
<dbReference type="PROSITE" id="PS00237">
    <property type="entry name" value="G_PROTEIN_RECEP_F1_1"/>
    <property type="match status" value="1"/>
</dbReference>
<dbReference type="PROSITE" id="PS50262">
    <property type="entry name" value="G_PROTEIN_RECEP_F1_2"/>
    <property type="match status" value="1"/>
</dbReference>
<keyword id="KW-1003">Cell membrane</keyword>
<keyword id="KW-1015">Disulfide bond</keyword>
<keyword id="KW-0297">G-protein coupled receptor</keyword>
<keyword id="KW-0325">Glycoprotein</keyword>
<keyword id="KW-0472">Membrane</keyword>
<keyword id="KW-0597">Phosphoprotein</keyword>
<keyword id="KW-0675">Receptor</keyword>
<keyword id="KW-1185">Reference proteome</keyword>
<keyword id="KW-0807">Transducer</keyword>
<keyword id="KW-0812">Transmembrane</keyword>
<keyword id="KW-1133">Transmembrane helix</keyword>
<proteinExistence type="evidence at transcript level"/>
<feature type="chain" id="PRO_0000070067" description="Prostaglandin E2 receptor EP4 subtype">
    <location>
        <begin position="1"/>
        <end position="488"/>
    </location>
</feature>
<feature type="topological domain" description="Extracellular" evidence="3">
    <location>
        <begin position="1"/>
        <end position="19"/>
    </location>
</feature>
<feature type="transmembrane region" description="Helical; Name=1" evidence="3">
    <location>
        <begin position="20"/>
        <end position="43"/>
    </location>
</feature>
<feature type="topological domain" description="Cytoplasmic" evidence="3">
    <location>
        <begin position="44"/>
        <end position="55"/>
    </location>
</feature>
<feature type="transmembrane region" description="Helical; Name=2" evidence="3">
    <location>
        <begin position="56"/>
        <end position="79"/>
    </location>
</feature>
<feature type="topological domain" description="Extracellular" evidence="3">
    <location>
        <begin position="80"/>
        <end position="96"/>
    </location>
</feature>
<feature type="transmembrane region" description="Helical; Name=3" evidence="3">
    <location>
        <begin position="97"/>
        <end position="115"/>
    </location>
</feature>
<feature type="topological domain" description="Cytoplasmic" evidence="3">
    <location>
        <begin position="116"/>
        <end position="135"/>
    </location>
</feature>
<feature type="transmembrane region" description="Helical; Name=4" evidence="3">
    <location>
        <begin position="136"/>
        <end position="160"/>
    </location>
</feature>
<feature type="topological domain" description="Extracellular" evidence="3">
    <location>
        <begin position="161"/>
        <end position="184"/>
    </location>
</feature>
<feature type="transmembrane region" description="Helical; Name=5" evidence="3">
    <location>
        <begin position="185"/>
        <end position="211"/>
    </location>
</feature>
<feature type="topological domain" description="Cytoplasmic" evidence="3">
    <location>
        <begin position="212"/>
        <end position="270"/>
    </location>
</feature>
<feature type="transmembrane region" description="Helical; Name=6" evidence="3">
    <location>
        <begin position="271"/>
        <end position="298"/>
    </location>
</feature>
<feature type="topological domain" description="Extracellular" evidence="3">
    <location>
        <begin position="299"/>
        <end position="315"/>
    </location>
</feature>
<feature type="transmembrane region" description="Helical; Name=7" evidence="3">
    <location>
        <begin position="316"/>
        <end position="335"/>
    </location>
</feature>
<feature type="topological domain" description="Cytoplasmic" evidence="3">
    <location>
        <begin position="336"/>
        <end position="488"/>
    </location>
</feature>
<feature type="region of interest" description="Disordered" evidence="5">
    <location>
        <begin position="358"/>
        <end position="381"/>
    </location>
</feature>
<feature type="region of interest" description="Disordered" evidence="5">
    <location>
        <begin position="456"/>
        <end position="475"/>
    </location>
</feature>
<feature type="compositionally biased region" description="Basic and acidic residues" evidence="5">
    <location>
        <begin position="358"/>
        <end position="371"/>
    </location>
</feature>
<feature type="compositionally biased region" description="Polar residues" evidence="5">
    <location>
        <begin position="372"/>
        <end position="381"/>
    </location>
</feature>
<feature type="modified residue" description="Phosphoserine" evidence="2">
    <location>
        <position position="377"/>
    </location>
</feature>
<feature type="modified residue" description="Phosphoserine" evidence="2">
    <location>
        <position position="380"/>
    </location>
</feature>
<feature type="modified residue" description="Phosphoserine" evidence="2">
    <location>
        <position position="382"/>
    </location>
</feature>
<feature type="modified residue" description="Phosphoserine" evidence="2">
    <location>
        <position position="385"/>
    </location>
</feature>
<feature type="glycosylation site" description="N-linked (GlcNAc...) asparagine" evidence="3">
    <location>
        <position position="7"/>
    </location>
</feature>
<feature type="glycosylation site" description="N-linked (GlcNAc...) asparagine" evidence="3">
    <location>
        <position position="177"/>
    </location>
</feature>
<feature type="disulfide bond" evidence="4">
    <location>
        <begin position="92"/>
        <end position="170"/>
    </location>
</feature>
<comment type="function">
    <text>Receptor for prostaglandin E2 (PGE2). The activity of this receptor is mediated by G(s) proteins that stimulate adenylate cyclase. Has a relaxing effect on smooth muscle. May play an important role in regulating renal hemodynamics, intestinal epithelial transport, adrenal aldosterone secretion, and uterine function.</text>
</comment>
<comment type="subunit">
    <text evidence="2">Interacts with FEM1A.</text>
</comment>
<comment type="subcellular location">
    <subcellularLocation>
        <location>Cell membrane</location>
        <topology>Multi-pass membrane protein</topology>
    </subcellularLocation>
</comment>
<comment type="tissue specificity">
    <text>Highly expressed in intestine, duodenal epithelium, uterus, thymus and adrenal cortex. Lower but significant expression in whole adrenal, lung, spleen, stomach, and kidney. In this latter organ, the receptor is localized in the glomeruli and the transitional epithelium of the renal calyx.</text>
</comment>
<comment type="PTM">
    <text evidence="1">Phosphorylation mediates agonist-mediated desensitization by promoting cytoplasmic retention.</text>
</comment>
<comment type="similarity">
    <text evidence="4">Belongs to the G-protein coupled receptor 1 family.</text>
</comment>
<name>PE2R4_RABIT</name>
<gene>
    <name type="primary">PTGER4</name>
</gene>
<organism>
    <name type="scientific">Oryctolagus cuniculus</name>
    <name type="common">Rabbit</name>
    <dbReference type="NCBI Taxonomy" id="9986"/>
    <lineage>
        <taxon>Eukaryota</taxon>
        <taxon>Metazoa</taxon>
        <taxon>Chordata</taxon>
        <taxon>Craniata</taxon>
        <taxon>Vertebrata</taxon>
        <taxon>Euteleostomi</taxon>
        <taxon>Mammalia</taxon>
        <taxon>Eutheria</taxon>
        <taxon>Euarchontoglires</taxon>
        <taxon>Glires</taxon>
        <taxon>Lagomorpha</taxon>
        <taxon>Leporidae</taxon>
        <taxon>Oryctolagus</taxon>
    </lineage>
</organism>
<protein>
    <recommendedName>
        <fullName>Prostaglandin E2 receptor EP4 subtype</fullName>
        <shortName>PGE receptor EP4 subtype</shortName>
        <shortName>PGE2 receptor EP4 subtype</shortName>
    </recommendedName>
    <alternativeName>
        <fullName>Prostanoid EP4 receptor</fullName>
    </alternativeName>
</protein>
<evidence type="ECO:0000250" key="1"/>
<evidence type="ECO:0000250" key="2">
    <source>
        <dbReference type="UniProtKB" id="P35408"/>
    </source>
</evidence>
<evidence type="ECO:0000255" key="3"/>
<evidence type="ECO:0000255" key="4">
    <source>
        <dbReference type="PROSITE-ProRule" id="PRU00521"/>
    </source>
</evidence>
<evidence type="ECO:0000256" key="5">
    <source>
        <dbReference type="SAM" id="MobiDB-lite"/>
    </source>
</evidence>
<reference key="1">
    <citation type="journal article" date="1996" name="Am. J. Physiol.">
        <title>Cloning and expression of the rabbit prostaglandin EP4 receptor.</title>
        <authorList>
            <person name="Breyer R.M."/>
            <person name="Davis L.S."/>
            <person name="Nian C."/>
            <person name="Redha R."/>
            <person name="Stillman B."/>
            <person name="Jacobson H.R."/>
            <person name="Breyer M.D."/>
        </authorList>
    </citation>
    <scope>NUCLEOTIDE SEQUENCE [MRNA]</scope>
    <source>
        <tissue>Kidney cortex</tissue>
    </source>
</reference>
<accession>Q28691</accession>
<sequence>MSTPVANASASSMPELLNNPVTIPAVMFIFGVVGNLVAIVVLCKSRKEQKETTFYTLVCGLAVTDLLGTLLVSPVTIATYMKGQWPGGQALCDYSTFILLFFGLSGLSIICAMSIERYLAINHAYFYSHYVDKRLAGLTLFAVYASNVLFCALPNMGLGRSRLQFPDTWCFIDWRTNVTAHAAFSYMYAGFSSFLILATVLCNVLVCGALLRMHRQFMRRTSLGTEQHHAAAAAAVTSAACRGHPTASPALPRLSDFRRRRSFRRIAGAEIQMVILLIATSLVVLICSIPLVVRVFINQLYQPDLVREISQNPDLQAIRIASVNPILDPWIYILLRKTVLSKAIEKIKCLFCRIGGSRRDRSGQHCSDSRRTSSAMSTHSRSFLSRELKEISSTSQTLLYLPELSENSLAGRNLLPGVPLVGLAQADTTSLRTWRGSETSDSSQGQDSESVLLVDEVGGGGRAGPTPKGSSLQVTFPSETLNLSEKCI</sequence>